<comment type="similarity">
    <text evidence="1">Belongs to the bacterial ribosomal protein bL34 family.</text>
</comment>
<sequence>MAKGKRTFQPNNRRRARVHGFRTRMRTRAGRAIVSARRNKGRKSLTA</sequence>
<protein>
    <recommendedName>
        <fullName evidence="1">Large ribosomal subunit protein bL34</fullName>
    </recommendedName>
    <alternativeName>
        <fullName evidence="2">50S ribosomal protein L34</fullName>
    </alternativeName>
</protein>
<feature type="chain" id="PRO_1000013327" description="Large ribosomal subunit protein bL34">
    <location>
        <begin position="1"/>
        <end position="47"/>
    </location>
</feature>
<dbReference type="EMBL" id="CR931997">
    <property type="protein sequence ID" value="CAI38286.1"/>
    <property type="molecule type" value="Genomic_DNA"/>
</dbReference>
<dbReference type="RefSeq" id="WP_005292556.1">
    <property type="nucleotide sequence ID" value="NC_007164.1"/>
</dbReference>
<dbReference type="SMR" id="Q4JSC1"/>
<dbReference type="STRING" id="306537.jk2104"/>
<dbReference type="GeneID" id="92739736"/>
<dbReference type="KEGG" id="cjk:jk2104"/>
<dbReference type="eggNOG" id="COG0230">
    <property type="taxonomic scope" value="Bacteria"/>
</dbReference>
<dbReference type="HOGENOM" id="CLU_129938_2_1_11"/>
<dbReference type="OrthoDB" id="9804832at2"/>
<dbReference type="Proteomes" id="UP000000545">
    <property type="component" value="Chromosome"/>
</dbReference>
<dbReference type="GO" id="GO:1990904">
    <property type="term" value="C:ribonucleoprotein complex"/>
    <property type="evidence" value="ECO:0007669"/>
    <property type="project" value="UniProtKB-KW"/>
</dbReference>
<dbReference type="GO" id="GO:0005840">
    <property type="term" value="C:ribosome"/>
    <property type="evidence" value="ECO:0007669"/>
    <property type="project" value="UniProtKB-KW"/>
</dbReference>
<dbReference type="GO" id="GO:0003735">
    <property type="term" value="F:structural constituent of ribosome"/>
    <property type="evidence" value="ECO:0007669"/>
    <property type="project" value="InterPro"/>
</dbReference>
<dbReference type="GO" id="GO:0006412">
    <property type="term" value="P:translation"/>
    <property type="evidence" value="ECO:0007669"/>
    <property type="project" value="UniProtKB-UniRule"/>
</dbReference>
<dbReference type="FunFam" id="1.10.287.3980:FF:000001">
    <property type="entry name" value="Mitochondrial ribosomal protein L34"/>
    <property type="match status" value="1"/>
</dbReference>
<dbReference type="Gene3D" id="1.10.287.3980">
    <property type="match status" value="1"/>
</dbReference>
<dbReference type="HAMAP" id="MF_00391">
    <property type="entry name" value="Ribosomal_bL34"/>
    <property type="match status" value="1"/>
</dbReference>
<dbReference type="InterPro" id="IPR000271">
    <property type="entry name" value="Ribosomal_bL34"/>
</dbReference>
<dbReference type="InterPro" id="IPR020939">
    <property type="entry name" value="Ribosomal_bL34_CS"/>
</dbReference>
<dbReference type="NCBIfam" id="TIGR01030">
    <property type="entry name" value="rpmH_bact"/>
    <property type="match status" value="1"/>
</dbReference>
<dbReference type="PANTHER" id="PTHR14503:SF4">
    <property type="entry name" value="LARGE RIBOSOMAL SUBUNIT PROTEIN BL34M"/>
    <property type="match status" value="1"/>
</dbReference>
<dbReference type="PANTHER" id="PTHR14503">
    <property type="entry name" value="MITOCHONDRIAL RIBOSOMAL PROTEIN 34 FAMILY MEMBER"/>
    <property type="match status" value="1"/>
</dbReference>
<dbReference type="Pfam" id="PF00468">
    <property type="entry name" value="Ribosomal_L34"/>
    <property type="match status" value="1"/>
</dbReference>
<dbReference type="PROSITE" id="PS00784">
    <property type="entry name" value="RIBOSOMAL_L34"/>
    <property type="match status" value="1"/>
</dbReference>
<accession>Q4JSC1</accession>
<name>RL34_CORJK</name>
<evidence type="ECO:0000255" key="1">
    <source>
        <dbReference type="HAMAP-Rule" id="MF_00391"/>
    </source>
</evidence>
<evidence type="ECO:0000305" key="2"/>
<reference key="1">
    <citation type="journal article" date="2005" name="J. Bacteriol.">
        <title>Complete genome sequence and analysis of the multiresistant nosocomial pathogen Corynebacterium jeikeium K411, a lipid-requiring bacterium of the human skin flora.</title>
        <authorList>
            <person name="Tauch A."/>
            <person name="Kaiser O."/>
            <person name="Hain T."/>
            <person name="Goesmann A."/>
            <person name="Weisshaar B."/>
            <person name="Albersmeier A."/>
            <person name="Bekel T."/>
            <person name="Bischoff N."/>
            <person name="Brune I."/>
            <person name="Chakraborty T."/>
            <person name="Kalinowski J."/>
            <person name="Meyer F."/>
            <person name="Rupp O."/>
            <person name="Schneiker S."/>
            <person name="Viehoever P."/>
            <person name="Puehler A."/>
        </authorList>
    </citation>
    <scope>NUCLEOTIDE SEQUENCE [LARGE SCALE GENOMIC DNA]</scope>
    <source>
        <strain>K411</strain>
    </source>
</reference>
<organism>
    <name type="scientific">Corynebacterium jeikeium (strain K411)</name>
    <dbReference type="NCBI Taxonomy" id="306537"/>
    <lineage>
        <taxon>Bacteria</taxon>
        <taxon>Bacillati</taxon>
        <taxon>Actinomycetota</taxon>
        <taxon>Actinomycetes</taxon>
        <taxon>Mycobacteriales</taxon>
        <taxon>Corynebacteriaceae</taxon>
        <taxon>Corynebacterium</taxon>
    </lineage>
</organism>
<keyword id="KW-1185">Reference proteome</keyword>
<keyword id="KW-0687">Ribonucleoprotein</keyword>
<keyword id="KW-0689">Ribosomal protein</keyword>
<proteinExistence type="inferred from homology"/>
<gene>
    <name evidence="1" type="primary">rpmH</name>
    <name type="ordered locus">jk2104</name>
</gene>